<name>NDK1_PSEMZ</name>
<feature type="chain" id="PRO_0000397959" description="Nucleoside diphosphate kinase 1">
    <location>
        <begin position="1" status="less than"/>
        <end position="18" status="greater than"/>
    </location>
</feature>
<feature type="non-consecutive residues" evidence="5">
    <location>
        <begin position="9"/>
        <end position="10"/>
    </location>
</feature>
<feature type="non-terminal residue" evidence="5">
    <location>
        <position position="1"/>
    </location>
</feature>
<feature type="non-terminal residue" evidence="5">
    <location>
        <position position="18"/>
    </location>
</feature>
<proteinExistence type="evidence at protein level"/>
<reference evidence="6" key="1">
    <citation type="journal article" date="2008" name="J. Proteomics">
        <title>A proteomics approach to identify proteins differentially expressed in Douglas-fir seedlings infected by Phellinus sulphurascens.</title>
        <authorList>
            <person name="Islam M.A."/>
            <person name="Sturrock R.N."/>
            <person name="Ekramoddoullah A.K.M."/>
        </authorList>
    </citation>
    <scope>IDENTIFICATION BY MASS SPECTROMETRY</scope>
</reference>
<protein>
    <recommendedName>
        <fullName evidence="2">Nucleoside diphosphate kinase 1</fullName>
        <ecNumber>2.7.4.6</ecNumber>
    </recommendedName>
    <alternativeName>
        <fullName evidence="2">Nucleoside diphosphate kinase I</fullName>
        <shortName evidence="2">NDK I</shortName>
        <shortName evidence="2">NDP kinase I</shortName>
        <shortName evidence="2">NDPK I</shortName>
    </alternativeName>
</protein>
<keyword id="KW-0067">ATP-binding</keyword>
<keyword id="KW-0418">Kinase</keyword>
<keyword id="KW-0460">Magnesium</keyword>
<keyword id="KW-0479">Metal-binding</keyword>
<keyword id="KW-0546">Nucleotide metabolism</keyword>
<keyword id="KW-0547">Nucleotide-binding</keyword>
<keyword id="KW-0597">Phosphoprotein</keyword>
<keyword id="KW-0808">Transferase</keyword>
<sequence>GLVGEIISRGDFAIDIGR</sequence>
<accession>P85929</accession>
<comment type="function">
    <text evidence="6">Major role in the synthesis of nucleoside triphosphates other than ATP. The ATP gamma phosphate is transferred to the NDP beta phosphate via a ping-pong mechanism, using a phosphorylated active-site intermediate.</text>
</comment>
<comment type="catalytic activity">
    <reaction evidence="4 6">
        <text>a 2'-deoxyribonucleoside 5'-diphosphate + ATP = a 2'-deoxyribonucleoside 5'-triphosphate + ADP</text>
        <dbReference type="Rhea" id="RHEA:44640"/>
        <dbReference type="ChEBI" id="CHEBI:30616"/>
        <dbReference type="ChEBI" id="CHEBI:61560"/>
        <dbReference type="ChEBI" id="CHEBI:73316"/>
        <dbReference type="ChEBI" id="CHEBI:456216"/>
        <dbReference type="EC" id="2.7.4.6"/>
    </reaction>
</comment>
<comment type="catalytic activity">
    <reaction evidence="4 6">
        <text>a ribonucleoside 5'-diphosphate + ATP = a ribonucleoside 5'-triphosphate + ADP</text>
        <dbReference type="Rhea" id="RHEA:18113"/>
        <dbReference type="ChEBI" id="CHEBI:30616"/>
        <dbReference type="ChEBI" id="CHEBI:57930"/>
        <dbReference type="ChEBI" id="CHEBI:61557"/>
        <dbReference type="ChEBI" id="CHEBI:456216"/>
        <dbReference type="EC" id="2.7.4.6"/>
    </reaction>
</comment>
<comment type="cofactor">
    <cofactor evidence="1">
        <name>Mg(2+)</name>
        <dbReference type="ChEBI" id="CHEBI:18420"/>
    </cofactor>
</comment>
<comment type="similarity">
    <text evidence="3">Belongs to the NDK family.</text>
</comment>
<evidence type="ECO:0000250" key="1">
    <source>
        <dbReference type="UniProtKB" id="P15531"/>
    </source>
</evidence>
<evidence type="ECO:0000250" key="2">
    <source>
        <dbReference type="UniProtKB" id="Q02254"/>
    </source>
</evidence>
<evidence type="ECO:0000255" key="3"/>
<evidence type="ECO:0000255" key="4">
    <source>
        <dbReference type="PROSITE-ProRule" id="PRU10030"/>
    </source>
</evidence>
<evidence type="ECO:0000303" key="5">
    <source>
    </source>
</evidence>
<evidence type="ECO:0000305" key="6"/>
<organism>
    <name type="scientific">Pseudotsuga menziesii</name>
    <name type="common">Douglas-fir</name>
    <name type="synonym">Abies menziesii</name>
    <dbReference type="NCBI Taxonomy" id="3357"/>
    <lineage>
        <taxon>Eukaryota</taxon>
        <taxon>Viridiplantae</taxon>
        <taxon>Streptophyta</taxon>
        <taxon>Embryophyta</taxon>
        <taxon>Tracheophyta</taxon>
        <taxon>Spermatophyta</taxon>
        <taxon>Pinopsida</taxon>
        <taxon>Pinidae</taxon>
        <taxon>Conifers I</taxon>
        <taxon>Pinales</taxon>
        <taxon>Pinaceae</taxon>
        <taxon>Pseudotsuga</taxon>
    </lineage>
</organism>
<dbReference type="EC" id="2.7.4.6"/>
<dbReference type="GO" id="GO:0005524">
    <property type="term" value="F:ATP binding"/>
    <property type="evidence" value="ECO:0007669"/>
    <property type="project" value="UniProtKB-KW"/>
</dbReference>
<dbReference type="GO" id="GO:0046872">
    <property type="term" value="F:metal ion binding"/>
    <property type="evidence" value="ECO:0007669"/>
    <property type="project" value="UniProtKB-KW"/>
</dbReference>
<dbReference type="GO" id="GO:0004550">
    <property type="term" value="F:nucleoside diphosphate kinase activity"/>
    <property type="evidence" value="ECO:0007669"/>
    <property type="project" value="UniProtKB-EC"/>
</dbReference>
<dbReference type="GO" id="GO:0009117">
    <property type="term" value="P:nucleotide metabolic process"/>
    <property type="evidence" value="ECO:0007669"/>
    <property type="project" value="UniProtKB-KW"/>
</dbReference>